<feature type="chain" id="PRO_1000126102" description="Glycogen synthase">
    <location>
        <begin position="1"/>
        <end position="477"/>
    </location>
</feature>
<feature type="binding site" evidence="1">
    <location>
        <position position="15"/>
    </location>
    <ligand>
        <name>ADP-alpha-D-glucose</name>
        <dbReference type="ChEBI" id="CHEBI:57498"/>
    </ligand>
</feature>
<protein>
    <recommendedName>
        <fullName evidence="1">Glycogen synthase</fullName>
        <ecNumber evidence="1">2.4.1.21</ecNumber>
    </recommendedName>
    <alternativeName>
        <fullName evidence="1">Starch [bacterial glycogen] synthase</fullName>
    </alternativeName>
</protein>
<proteinExistence type="inferred from homology"/>
<comment type="function">
    <text evidence="1">Synthesizes alpha-1,4-glucan chains using ADP-glucose.</text>
</comment>
<comment type="catalytic activity">
    <reaction evidence="1">
        <text>[(1-&gt;4)-alpha-D-glucosyl](n) + ADP-alpha-D-glucose = [(1-&gt;4)-alpha-D-glucosyl](n+1) + ADP + H(+)</text>
        <dbReference type="Rhea" id="RHEA:18189"/>
        <dbReference type="Rhea" id="RHEA-COMP:9584"/>
        <dbReference type="Rhea" id="RHEA-COMP:9587"/>
        <dbReference type="ChEBI" id="CHEBI:15378"/>
        <dbReference type="ChEBI" id="CHEBI:15444"/>
        <dbReference type="ChEBI" id="CHEBI:57498"/>
        <dbReference type="ChEBI" id="CHEBI:456216"/>
        <dbReference type="EC" id="2.4.1.21"/>
    </reaction>
</comment>
<comment type="pathway">
    <text evidence="1">Glycan biosynthesis; glycogen biosynthesis.</text>
</comment>
<comment type="similarity">
    <text evidence="1">Belongs to the glycosyltransferase 1 family. Bacterial/plant glycogen synthase subfamily.</text>
</comment>
<organism>
    <name type="scientific">Salmonella schwarzengrund (strain CVM19633)</name>
    <dbReference type="NCBI Taxonomy" id="439843"/>
    <lineage>
        <taxon>Bacteria</taxon>
        <taxon>Pseudomonadati</taxon>
        <taxon>Pseudomonadota</taxon>
        <taxon>Gammaproteobacteria</taxon>
        <taxon>Enterobacterales</taxon>
        <taxon>Enterobacteriaceae</taxon>
        <taxon>Salmonella</taxon>
    </lineage>
</organism>
<dbReference type="EC" id="2.4.1.21" evidence="1"/>
<dbReference type="EMBL" id="CP001127">
    <property type="protein sequence ID" value="ACF90033.1"/>
    <property type="molecule type" value="Genomic_DNA"/>
</dbReference>
<dbReference type="RefSeq" id="WP_001197669.1">
    <property type="nucleotide sequence ID" value="NC_011094.1"/>
</dbReference>
<dbReference type="SMR" id="B4TY86"/>
<dbReference type="CAZy" id="GT5">
    <property type="family name" value="Glycosyltransferase Family 5"/>
</dbReference>
<dbReference type="KEGG" id="sew:SeSA_A3725"/>
<dbReference type="HOGENOM" id="CLU_009583_18_4_6"/>
<dbReference type="UniPathway" id="UPA00164"/>
<dbReference type="Proteomes" id="UP000001865">
    <property type="component" value="Chromosome"/>
</dbReference>
<dbReference type="GO" id="GO:0005829">
    <property type="term" value="C:cytosol"/>
    <property type="evidence" value="ECO:0007669"/>
    <property type="project" value="TreeGrafter"/>
</dbReference>
<dbReference type="GO" id="GO:0009011">
    <property type="term" value="F:alpha-1,4-glucan glucosyltransferase (ADP-glucose donor) activity"/>
    <property type="evidence" value="ECO:0007669"/>
    <property type="project" value="UniProtKB-UniRule"/>
</dbReference>
<dbReference type="GO" id="GO:0004373">
    <property type="term" value="F:alpha-1,4-glucan glucosyltransferase (UDP-glucose donor) activity"/>
    <property type="evidence" value="ECO:0007669"/>
    <property type="project" value="InterPro"/>
</dbReference>
<dbReference type="GO" id="GO:0005978">
    <property type="term" value="P:glycogen biosynthetic process"/>
    <property type="evidence" value="ECO:0007669"/>
    <property type="project" value="UniProtKB-UniRule"/>
</dbReference>
<dbReference type="CDD" id="cd03791">
    <property type="entry name" value="GT5_Glycogen_synthase_DULL1-like"/>
    <property type="match status" value="1"/>
</dbReference>
<dbReference type="FunFam" id="3.40.50.2000:FF:000008">
    <property type="entry name" value="Glycogen synthase"/>
    <property type="match status" value="1"/>
</dbReference>
<dbReference type="FunFam" id="3.40.50.2000:FF:000011">
    <property type="entry name" value="Glycogen synthase"/>
    <property type="match status" value="1"/>
</dbReference>
<dbReference type="Gene3D" id="3.40.50.2000">
    <property type="entry name" value="Glycogen Phosphorylase B"/>
    <property type="match status" value="2"/>
</dbReference>
<dbReference type="HAMAP" id="MF_00484">
    <property type="entry name" value="Glycogen_synth"/>
    <property type="match status" value="1"/>
</dbReference>
<dbReference type="InterPro" id="IPR001296">
    <property type="entry name" value="Glyco_trans_1"/>
</dbReference>
<dbReference type="InterPro" id="IPR011835">
    <property type="entry name" value="GS/SS"/>
</dbReference>
<dbReference type="InterPro" id="IPR013534">
    <property type="entry name" value="Starch_synth_cat_dom"/>
</dbReference>
<dbReference type="NCBIfam" id="TIGR02095">
    <property type="entry name" value="glgA"/>
    <property type="match status" value="1"/>
</dbReference>
<dbReference type="NCBIfam" id="NF001899">
    <property type="entry name" value="PRK00654.1-2"/>
    <property type="match status" value="1"/>
</dbReference>
<dbReference type="PANTHER" id="PTHR45825:SF11">
    <property type="entry name" value="ALPHA AMYLASE DOMAIN-CONTAINING PROTEIN"/>
    <property type="match status" value="1"/>
</dbReference>
<dbReference type="PANTHER" id="PTHR45825">
    <property type="entry name" value="GRANULE-BOUND STARCH SYNTHASE 1, CHLOROPLASTIC/AMYLOPLASTIC"/>
    <property type="match status" value="1"/>
</dbReference>
<dbReference type="Pfam" id="PF08323">
    <property type="entry name" value="Glyco_transf_5"/>
    <property type="match status" value="1"/>
</dbReference>
<dbReference type="Pfam" id="PF00534">
    <property type="entry name" value="Glycos_transf_1"/>
    <property type="match status" value="1"/>
</dbReference>
<dbReference type="SUPFAM" id="SSF53756">
    <property type="entry name" value="UDP-Glycosyltransferase/glycogen phosphorylase"/>
    <property type="match status" value="1"/>
</dbReference>
<accession>B4TY86</accession>
<name>GLGA_SALSV</name>
<evidence type="ECO:0000255" key="1">
    <source>
        <dbReference type="HAMAP-Rule" id="MF_00484"/>
    </source>
</evidence>
<keyword id="KW-0320">Glycogen biosynthesis</keyword>
<keyword id="KW-0328">Glycosyltransferase</keyword>
<keyword id="KW-0808">Transferase</keyword>
<reference key="1">
    <citation type="journal article" date="2011" name="J. Bacteriol.">
        <title>Comparative genomics of 28 Salmonella enterica isolates: evidence for CRISPR-mediated adaptive sublineage evolution.</title>
        <authorList>
            <person name="Fricke W.F."/>
            <person name="Mammel M.K."/>
            <person name="McDermott P.F."/>
            <person name="Tartera C."/>
            <person name="White D.G."/>
            <person name="Leclerc J.E."/>
            <person name="Ravel J."/>
            <person name="Cebula T.A."/>
        </authorList>
    </citation>
    <scope>NUCLEOTIDE SEQUENCE [LARGE SCALE GENOMIC DNA]</scope>
    <source>
        <strain>CVM19633</strain>
    </source>
</reference>
<sequence length="477" mass="52946">MQVLHVCSEMFPLLKTGGLADVIGALPAAQIADGVDVRVLLPGFPDIRRGIPDAHVVSRRDTFAGKISLLFGHYNGVGIYLIDAPHLYERPGSPYHDTNLYAYTDNVLRFALLGWVGCEMACGLDPFWRPDVVHAHDWHAGLAPAYLAARGRPAKSVFTVHNLAYQGMFYAKHMDDIELPWSFFNMHGLEFNGQLSFLKAGLYYADHITAVSPTYAREITEPQFAYGMEGLLRQRHLEGRLSGILNGVDEKIWNPESDLLLASRYTRDTLEEKAENKRQLQIAMGLKVNDKVPLFAVVSRLTNQKGLDLVLEALPGLLEQGGQLALLGAGDPVLQEGFLAAAAEHPGQVGVQIGYHEAFSHRIMGGADVILVPSRFEPCGLTQLYGLKYGTLPLVRRTGGLADTVSDSSLENLADGIASGFVFEDSNAWSLLRAIRRAFVLWSRPSLWRFVQRQAMAMDFSWQVAAKSYRELYYRLK</sequence>
<gene>
    <name evidence="1" type="primary">glgA</name>
    <name type="ordered locus">SeSA_A3725</name>
</gene>